<gene>
    <name evidence="1" type="primary">rlmN</name>
    <name type="ordered locus">BQ00190</name>
</gene>
<name>RLMN_BARQU</name>
<proteinExistence type="inferred from homology"/>
<keyword id="KW-0004">4Fe-4S</keyword>
<keyword id="KW-0963">Cytoplasm</keyword>
<keyword id="KW-1015">Disulfide bond</keyword>
<keyword id="KW-0408">Iron</keyword>
<keyword id="KW-0411">Iron-sulfur</keyword>
<keyword id="KW-0479">Metal-binding</keyword>
<keyword id="KW-0489">Methyltransferase</keyword>
<keyword id="KW-0698">rRNA processing</keyword>
<keyword id="KW-0949">S-adenosyl-L-methionine</keyword>
<keyword id="KW-0808">Transferase</keyword>
<keyword id="KW-0819">tRNA processing</keyword>
<sequence length="409" mass="45724">MAVSYDFRPISVCRARESNNVVVKKRSKRSLIGLSQNEMAEALKAIGVPEQQTRMRVRQLWHWLYVRGVSNFDEILNISKPIREMLKNHFSIARPEIVGEQISKDGTRKWLLRFPAREDGRPVEIETVYIPEEGRGTLCLSSQVGCTLTCSFCYTGTQVLVRNLTAEEILAQLLVARDCLGDFPNRTTPDGAIVPVEGRKITNIVMMGMGEPLYNFEVVKKALLIASDGDGLSLSKRRITLSTSGVVPEIVRAGEEIGVMLAVSLHAVHDTLRDMLVPINKKYPLALLIDACRNYPGLSNAKRITFEYVMLKGINDSLDDAKRLIQLLKGIPAKINLIPFNPWPGSNYQCSDWEQIERFADVVNQAGYASPIRIPRGRDILAACGQLKSASERLRKSGRLQIEYAVGNK</sequence>
<evidence type="ECO:0000255" key="1">
    <source>
        <dbReference type="HAMAP-Rule" id="MF_01849"/>
    </source>
</evidence>
<evidence type="ECO:0000255" key="2">
    <source>
        <dbReference type="PROSITE-ProRule" id="PRU01266"/>
    </source>
</evidence>
<accession>Q6G1C0</accession>
<comment type="function">
    <text evidence="1">Specifically methylates position 2 of adenine 2503 in 23S rRNA and position 2 of adenine 37 in tRNAs. m2A2503 modification seems to play a crucial role in the proofreading step occurring at the peptidyl transferase center and thus would serve to optimize ribosomal fidelity.</text>
</comment>
<comment type="catalytic activity">
    <reaction evidence="1">
        <text>adenosine(2503) in 23S rRNA + 2 reduced [2Fe-2S]-[ferredoxin] + 2 S-adenosyl-L-methionine = 2-methyladenosine(2503) in 23S rRNA + 5'-deoxyadenosine + L-methionine + 2 oxidized [2Fe-2S]-[ferredoxin] + S-adenosyl-L-homocysteine</text>
        <dbReference type="Rhea" id="RHEA:42916"/>
        <dbReference type="Rhea" id="RHEA-COMP:10000"/>
        <dbReference type="Rhea" id="RHEA-COMP:10001"/>
        <dbReference type="Rhea" id="RHEA-COMP:10152"/>
        <dbReference type="Rhea" id="RHEA-COMP:10282"/>
        <dbReference type="ChEBI" id="CHEBI:17319"/>
        <dbReference type="ChEBI" id="CHEBI:33737"/>
        <dbReference type="ChEBI" id="CHEBI:33738"/>
        <dbReference type="ChEBI" id="CHEBI:57844"/>
        <dbReference type="ChEBI" id="CHEBI:57856"/>
        <dbReference type="ChEBI" id="CHEBI:59789"/>
        <dbReference type="ChEBI" id="CHEBI:74411"/>
        <dbReference type="ChEBI" id="CHEBI:74497"/>
        <dbReference type="EC" id="2.1.1.192"/>
    </reaction>
</comment>
<comment type="catalytic activity">
    <reaction evidence="1">
        <text>adenosine(37) in tRNA + 2 reduced [2Fe-2S]-[ferredoxin] + 2 S-adenosyl-L-methionine = 2-methyladenosine(37) in tRNA + 5'-deoxyadenosine + L-methionine + 2 oxidized [2Fe-2S]-[ferredoxin] + S-adenosyl-L-homocysteine</text>
        <dbReference type="Rhea" id="RHEA:43332"/>
        <dbReference type="Rhea" id="RHEA-COMP:10000"/>
        <dbReference type="Rhea" id="RHEA-COMP:10001"/>
        <dbReference type="Rhea" id="RHEA-COMP:10162"/>
        <dbReference type="Rhea" id="RHEA-COMP:10485"/>
        <dbReference type="ChEBI" id="CHEBI:17319"/>
        <dbReference type="ChEBI" id="CHEBI:33737"/>
        <dbReference type="ChEBI" id="CHEBI:33738"/>
        <dbReference type="ChEBI" id="CHEBI:57844"/>
        <dbReference type="ChEBI" id="CHEBI:57856"/>
        <dbReference type="ChEBI" id="CHEBI:59789"/>
        <dbReference type="ChEBI" id="CHEBI:74411"/>
        <dbReference type="ChEBI" id="CHEBI:74497"/>
        <dbReference type="EC" id="2.1.1.192"/>
    </reaction>
</comment>
<comment type="cofactor">
    <cofactor evidence="1">
        <name>[4Fe-4S] cluster</name>
        <dbReference type="ChEBI" id="CHEBI:49883"/>
    </cofactor>
    <text evidence="1">Binds 1 [4Fe-4S] cluster. The cluster is coordinated with 3 cysteines and an exchangeable S-adenosyl-L-methionine.</text>
</comment>
<comment type="subcellular location">
    <subcellularLocation>
        <location evidence="1">Cytoplasm</location>
    </subcellularLocation>
</comment>
<comment type="miscellaneous">
    <text evidence="1">Reaction proceeds by a ping-pong mechanism involving intermediate methylation of a conserved cysteine residue.</text>
</comment>
<comment type="similarity">
    <text evidence="1">Belongs to the radical SAM superfamily. RlmN family.</text>
</comment>
<feature type="chain" id="PRO_0000350046" description="Dual-specificity RNA methyltransferase RlmN">
    <location>
        <begin position="1"/>
        <end position="409"/>
    </location>
</feature>
<feature type="domain" description="Radical SAM core" evidence="2">
    <location>
        <begin position="132"/>
        <end position="373"/>
    </location>
</feature>
<feature type="active site" description="Proton acceptor" evidence="1">
    <location>
        <position position="126"/>
    </location>
</feature>
<feature type="active site" description="S-methylcysteine intermediate" evidence="1">
    <location>
        <position position="384"/>
    </location>
</feature>
<feature type="binding site" evidence="1">
    <location>
        <position position="146"/>
    </location>
    <ligand>
        <name>[4Fe-4S] cluster</name>
        <dbReference type="ChEBI" id="CHEBI:49883"/>
        <note>4Fe-4S-S-AdoMet</note>
    </ligand>
</feature>
<feature type="binding site" evidence="1">
    <location>
        <position position="150"/>
    </location>
    <ligand>
        <name>[4Fe-4S] cluster</name>
        <dbReference type="ChEBI" id="CHEBI:49883"/>
        <note>4Fe-4S-S-AdoMet</note>
    </ligand>
</feature>
<feature type="binding site" evidence="1">
    <location>
        <position position="153"/>
    </location>
    <ligand>
        <name>[4Fe-4S] cluster</name>
        <dbReference type="ChEBI" id="CHEBI:49883"/>
        <note>4Fe-4S-S-AdoMet</note>
    </ligand>
</feature>
<feature type="binding site" evidence="1">
    <location>
        <begin position="210"/>
        <end position="211"/>
    </location>
    <ligand>
        <name>S-adenosyl-L-methionine</name>
        <dbReference type="ChEBI" id="CHEBI:59789"/>
    </ligand>
</feature>
<feature type="binding site" evidence="1">
    <location>
        <position position="242"/>
    </location>
    <ligand>
        <name>S-adenosyl-L-methionine</name>
        <dbReference type="ChEBI" id="CHEBI:59789"/>
    </ligand>
</feature>
<feature type="binding site" evidence="1">
    <location>
        <begin position="264"/>
        <end position="266"/>
    </location>
    <ligand>
        <name>S-adenosyl-L-methionine</name>
        <dbReference type="ChEBI" id="CHEBI:59789"/>
    </ligand>
</feature>
<feature type="binding site" evidence="1">
    <location>
        <position position="341"/>
    </location>
    <ligand>
        <name>S-adenosyl-L-methionine</name>
        <dbReference type="ChEBI" id="CHEBI:59789"/>
    </ligand>
</feature>
<feature type="disulfide bond" description="(transient)" evidence="1">
    <location>
        <begin position="139"/>
        <end position="384"/>
    </location>
</feature>
<dbReference type="EC" id="2.1.1.192" evidence="1"/>
<dbReference type="EMBL" id="BX897700">
    <property type="protein sequence ID" value="CAF25526.1"/>
    <property type="molecule type" value="Genomic_DNA"/>
</dbReference>
<dbReference type="RefSeq" id="WP_011178857.1">
    <property type="nucleotide sequence ID" value="NC_005955.1"/>
</dbReference>
<dbReference type="SMR" id="Q6G1C0"/>
<dbReference type="KEGG" id="bqu:BQ00190"/>
<dbReference type="eggNOG" id="COG0820">
    <property type="taxonomic scope" value="Bacteria"/>
</dbReference>
<dbReference type="HOGENOM" id="CLU_029101_0_0_5"/>
<dbReference type="OrthoDB" id="9793973at2"/>
<dbReference type="Proteomes" id="UP000000597">
    <property type="component" value="Chromosome"/>
</dbReference>
<dbReference type="GO" id="GO:0005737">
    <property type="term" value="C:cytoplasm"/>
    <property type="evidence" value="ECO:0007669"/>
    <property type="project" value="UniProtKB-SubCell"/>
</dbReference>
<dbReference type="GO" id="GO:0051539">
    <property type="term" value="F:4 iron, 4 sulfur cluster binding"/>
    <property type="evidence" value="ECO:0007669"/>
    <property type="project" value="UniProtKB-UniRule"/>
</dbReference>
<dbReference type="GO" id="GO:0046872">
    <property type="term" value="F:metal ion binding"/>
    <property type="evidence" value="ECO:0007669"/>
    <property type="project" value="UniProtKB-KW"/>
</dbReference>
<dbReference type="GO" id="GO:0070040">
    <property type="term" value="F:rRNA (adenine(2503)-C2-)-methyltransferase activity"/>
    <property type="evidence" value="ECO:0007669"/>
    <property type="project" value="UniProtKB-UniRule"/>
</dbReference>
<dbReference type="GO" id="GO:0019843">
    <property type="term" value="F:rRNA binding"/>
    <property type="evidence" value="ECO:0007669"/>
    <property type="project" value="UniProtKB-UniRule"/>
</dbReference>
<dbReference type="GO" id="GO:0002935">
    <property type="term" value="F:tRNA (adenine(37)-C2)-methyltransferase activity"/>
    <property type="evidence" value="ECO:0007669"/>
    <property type="project" value="UniProtKB-UniRule"/>
</dbReference>
<dbReference type="GO" id="GO:0000049">
    <property type="term" value="F:tRNA binding"/>
    <property type="evidence" value="ECO:0007669"/>
    <property type="project" value="UniProtKB-UniRule"/>
</dbReference>
<dbReference type="GO" id="GO:0070475">
    <property type="term" value="P:rRNA base methylation"/>
    <property type="evidence" value="ECO:0007669"/>
    <property type="project" value="UniProtKB-UniRule"/>
</dbReference>
<dbReference type="GO" id="GO:0030488">
    <property type="term" value="P:tRNA methylation"/>
    <property type="evidence" value="ECO:0007669"/>
    <property type="project" value="UniProtKB-UniRule"/>
</dbReference>
<dbReference type="CDD" id="cd01335">
    <property type="entry name" value="Radical_SAM"/>
    <property type="match status" value="1"/>
</dbReference>
<dbReference type="FunFam" id="3.20.20.70:FF:000008">
    <property type="entry name" value="Dual-specificity RNA methyltransferase RlmN"/>
    <property type="match status" value="1"/>
</dbReference>
<dbReference type="Gene3D" id="1.10.150.530">
    <property type="match status" value="1"/>
</dbReference>
<dbReference type="Gene3D" id="3.20.20.70">
    <property type="entry name" value="Aldolase class I"/>
    <property type="match status" value="1"/>
</dbReference>
<dbReference type="HAMAP" id="MF_01849">
    <property type="entry name" value="RNA_methyltr_RlmN"/>
    <property type="match status" value="1"/>
</dbReference>
<dbReference type="InterPro" id="IPR013785">
    <property type="entry name" value="Aldolase_TIM"/>
</dbReference>
<dbReference type="InterPro" id="IPR040072">
    <property type="entry name" value="Methyltransferase_A"/>
</dbReference>
<dbReference type="InterPro" id="IPR048641">
    <property type="entry name" value="RlmN_N"/>
</dbReference>
<dbReference type="InterPro" id="IPR027492">
    <property type="entry name" value="RNA_MTrfase_RlmN"/>
</dbReference>
<dbReference type="InterPro" id="IPR004383">
    <property type="entry name" value="rRNA_lsu_MTrfase_RlmN/Cfr"/>
</dbReference>
<dbReference type="InterPro" id="IPR007197">
    <property type="entry name" value="rSAM"/>
</dbReference>
<dbReference type="NCBIfam" id="TIGR00048">
    <property type="entry name" value="rRNA_mod_RlmN"/>
    <property type="match status" value="1"/>
</dbReference>
<dbReference type="PANTHER" id="PTHR30544">
    <property type="entry name" value="23S RRNA METHYLTRANSFERASE"/>
    <property type="match status" value="1"/>
</dbReference>
<dbReference type="PANTHER" id="PTHR30544:SF5">
    <property type="entry name" value="RADICAL SAM CORE DOMAIN-CONTAINING PROTEIN"/>
    <property type="match status" value="1"/>
</dbReference>
<dbReference type="Pfam" id="PF04055">
    <property type="entry name" value="Radical_SAM"/>
    <property type="match status" value="1"/>
</dbReference>
<dbReference type="Pfam" id="PF21016">
    <property type="entry name" value="RlmN_N"/>
    <property type="match status" value="1"/>
</dbReference>
<dbReference type="PIRSF" id="PIRSF006004">
    <property type="entry name" value="CHP00048"/>
    <property type="match status" value="1"/>
</dbReference>
<dbReference type="SFLD" id="SFLDF00275">
    <property type="entry name" value="adenosine_C2_methyltransferase"/>
    <property type="match status" value="1"/>
</dbReference>
<dbReference type="SFLD" id="SFLDS00029">
    <property type="entry name" value="Radical_SAM"/>
    <property type="match status" value="1"/>
</dbReference>
<dbReference type="SUPFAM" id="SSF102114">
    <property type="entry name" value="Radical SAM enzymes"/>
    <property type="match status" value="1"/>
</dbReference>
<dbReference type="PROSITE" id="PS51918">
    <property type="entry name" value="RADICAL_SAM"/>
    <property type="match status" value="1"/>
</dbReference>
<organism>
    <name type="scientific">Bartonella quintana (strain Toulouse)</name>
    <name type="common">Rochalimaea quintana</name>
    <dbReference type="NCBI Taxonomy" id="283165"/>
    <lineage>
        <taxon>Bacteria</taxon>
        <taxon>Pseudomonadati</taxon>
        <taxon>Pseudomonadota</taxon>
        <taxon>Alphaproteobacteria</taxon>
        <taxon>Hyphomicrobiales</taxon>
        <taxon>Bartonellaceae</taxon>
        <taxon>Bartonella</taxon>
    </lineage>
</organism>
<protein>
    <recommendedName>
        <fullName evidence="1">Dual-specificity RNA methyltransferase RlmN</fullName>
        <ecNumber evidence="1">2.1.1.192</ecNumber>
    </recommendedName>
    <alternativeName>
        <fullName evidence="1">23S rRNA (adenine(2503)-C(2))-methyltransferase</fullName>
    </alternativeName>
    <alternativeName>
        <fullName evidence="1">23S rRNA m2A2503 methyltransferase</fullName>
    </alternativeName>
    <alternativeName>
        <fullName evidence="1">Ribosomal RNA large subunit methyltransferase N</fullName>
    </alternativeName>
    <alternativeName>
        <fullName evidence="1">tRNA (adenine(37)-C(2))-methyltransferase</fullName>
    </alternativeName>
    <alternativeName>
        <fullName evidence="1">tRNA m2A37 methyltransferase</fullName>
    </alternativeName>
</protein>
<reference key="1">
    <citation type="journal article" date="2004" name="Proc. Natl. Acad. Sci. U.S.A.">
        <title>The louse-borne human pathogen Bartonella quintana is a genomic derivative of the zoonotic agent Bartonella henselae.</title>
        <authorList>
            <person name="Alsmark U.C.M."/>
            <person name="Frank A.C."/>
            <person name="Karlberg E.O."/>
            <person name="Legault B.-A."/>
            <person name="Ardell D.H."/>
            <person name="Canbaeck B."/>
            <person name="Eriksson A.-S."/>
            <person name="Naeslund A.K."/>
            <person name="Handley S.A."/>
            <person name="Huvet M."/>
            <person name="La Scola B."/>
            <person name="Holmberg M."/>
            <person name="Andersson S.G.E."/>
        </authorList>
    </citation>
    <scope>NUCLEOTIDE SEQUENCE [LARGE SCALE GENOMIC DNA]</scope>
    <source>
        <strain>Toulouse</strain>
    </source>
</reference>